<organism>
    <name type="scientific">Mastigocladus laminosus</name>
    <name type="common">Fischerella sp.</name>
    <dbReference type="NCBI Taxonomy" id="83541"/>
    <lineage>
        <taxon>Bacteria</taxon>
        <taxon>Bacillati</taxon>
        <taxon>Cyanobacteriota</taxon>
        <taxon>Cyanophyceae</taxon>
        <taxon>Nostocales</taxon>
        <taxon>Hapalosiphonaceae</taxon>
        <taxon>Mastigocladus</taxon>
    </lineage>
</organism>
<feature type="chain" id="PRO_0000199169" description="Phycoerythrocyanin alpha chain">
    <location>
        <begin position="1"/>
        <end position="162"/>
    </location>
</feature>
<feature type="binding site" description="covalent">
    <location>
        <position position="84"/>
    </location>
    <ligand>
        <name>(15Z)-phycoviolobilin</name>
        <dbReference type="ChEBI" id="CHEBI:189063"/>
    </ligand>
</feature>
<feature type="helix" evidence="2">
    <location>
        <begin position="4"/>
        <end position="15"/>
    </location>
</feature>
<feature type="turn" evidence="2">
    <location>
        <begin position="21"/>
        <end position="24"/>
    </location>
</feature>
<feature type="helix" evidence="2">
    <location>
        <begin position="25"/>
        <end position="28"/>
    </location>
</feature>
<feature type="helix" evidence="2">
    <location>
        <begin position="31"/>
        <end position="62"/>
    </location>
</feature>
<feature type="helix" evidence="2">
    <location>
        <begin position="64"/>
        <end position="66"/>
    </location>
</feature>
<feature type="strand" evidence="2">
    <location>
        <begin position="71"/>
        <end position="74"/>
    </location>
</feature>
<feature type="helix" evidence="2">
    <location>
        <begin position="78"/>
        <end position="101"/>
    </location>
</feature>
<feature type="helix" evidence="2">
    <location>
        <begin position="105"/>
        <end position="110"/>
    </location>
</feature>
<feature type="turn" evidence="2">
    <location>
        <begin position="111"/>
        <end position="114"/>
    </location>
</feature>
<feature type="helix" evidence="2">
    <location>
        <begin position="115"/>
        <end position="118"/>
    </location>
</feature>
<feature type="turn" evidence="2">
    <location>
        <begin position="119"/>
        <end position="122"/>
    </location>
</feature>
<feature type="helix" evidence="2">
    <location>
        <begin position="126"/>
        <end position="138"/>
    </location>
</feature>
<feature type="helix" evidence="2">
    <location>
        <begin position="144"/>
        <end position="160"/>
    </location>
</feature>
<gene>
    <name type="primary">pccA</name>
</gene>
<protein>
    <recommendedName>
        <fullName>Phycoerythrocyanin alpha chain</fullName>
    </recommendedName>
</protein>
<reference key="1">
    <citation type="journal article" date="1990" name="Gene">
        <title>Genes encoding both subunits of phycoerythrocyanin, a light-harvesting biliprotein from the cyanobacterium Mastigocladus laminosus.</title>
        <authorList>
            <person name="Eberlein M."/>
            <person name="Kufer W."/>
        </authorList>
    </citation>
    <scope>NUCLEOTIDE SEQUENCE [GENOMIC DNA]</scope>
</reference>
<reference key="2">
    <citation type="journal article" date="1983" name="Hoppe-Seyler's Z. Physiol. Chem.">
        <title>The complete amino-acid sequence of both subunits of phycoerythrocyanin from the thermophilic cyanobacterium Mastigocladus laminosus.</title>
        <authorList>
            <person name="Fueglistaller P."/>
            <person name="Suter F."/>
            <person name="Zuber H."/>
        </authorList>
    </citation>
    <scope>PROTEIN SEQUENCE</scope>
</reference>
<reference key="3">
    <citation type="journal article" date="1987" name="J. Am. Chem. Soc.">
        <title>Chromopeptides from phycoerythrocyanin. Structure and linkage of the three bilin groups.</title>
        <authorList>
            <person name="Bishop J.E."/>
            <person name="Rapoport H."/>
            <person name="Klotz A.V."/>
            <person name="Chan C.F."/>
            <person name="Glazer A.N."/>
            <person name="Fueglistaller P."/>
            <person name="Zuber H."/>
        </authorList>
    </citation>
    <scope>CHROMOPHORE STRUCTURE</scope>
    <scope>CHROMOPHORE BINDING AT CYS-84</scope>
</reference>
<reference key="4">
    <citation type="journal article" date="1990" name="J. Mol. Biol.">
        <title>Refined three-dimensional structure of phycoerythrocyanin from the cyanobacterium Mastigocladus laminosus at 2.7 A.</title>
        <authorList>
            <person name="Duerring M."/>
            <person name="Huber R."/>
            <person name="Bode W."/>
            <person name="Ruembelli R."/>
            <person name="Zuber H."/>
        </authorList>
    </citation>
    <scope>X-RAY CRYSTALLOGRAPHY (2.7 ANGSTROMS)</scope>
</reference>
<reference key="5">
    <citation type="journal article" date="2007" name="Biochemistry">
        <title>Structural basis for the photochemistry of alpha-phycoerythrocyanin.</title>
        <authorList>
            <person name="Schmidt M."/>
            <person name="Patel A."/>
            <person name="Zhao Y."/>
            <person name="Reuter W."/>
        </authorList>
    </citation>
    <scope>X-RAY CRYSTALLOGRAPHY (2.25 ANGSTROMS) OF 1-162</scope>
    <scope>CHROMOPHORE BINDING AT CYS-84</scope>
</reference>
<name>PHEA_MASLA</name>
<dbReference type="EMBL" id="M34254">
    <property type="protein sequence ID" value="AAC64654.1"/>
    <property type="molecule type" value="Genomic_DNA"/>
</dbReference>
<dbReference type="PDB" id="2C7J">
    <property type="method" value="X-ray"/>
    <property type="resolution" value="3.00 A"/>
    <property type="chains" value="A=1-162"/>
</dbReference>
<dbReference type="PDB" id="2C7K">
    <property type="method" value="X-ray"/>
    <property type="resolution" value="3.20 A"/>
    <property type="chains" value="A=1-162"/>
</dbReference>
<dbReference type="PDB" id="2C7L">
    <property type="method" value="X-ray"/>
    <property type="resolution" value="2.85 A"/>
    <property type="chains" value="A=1-162"/>
</dbReference>
<dbReference type="PDB" id="2J96">
    <property type="method" value="X-ray"/>
    <property type="resolution" value="2.25 A"/>
    <property type="chains" value="A/B=1-162"/>
</dbReference>
<dbReference type="PDBsum" id="2C7J"/>
<dbReference type="PDBsum" id="2C7K"/>
<dbReference type="PDBsum" id="2C7L"/>
<dbReference type="PDBsum" id="2J96"/>
<dbReference type="SMR" id="P00309"/>
<dbReference type="EvolutionaryTrace" id="P00309"/>
<dbReference type="GO" id="GO:0030089">
    <property type="term" value="C:phycobilisome"/>
    <property type="evidence" value="ECO:0007669"/>
    <property type="project" value="UniProtKB-KW"/>
</dbReference>
<dbReference type="GO" id="GO:0031676">
    <property type="term" value="C:plasma membrane-derived thylakoid membrane"/>
    <property type="evidence" value="ECO:0007669"/>
    <property type="project" value="UniProtKB-SubCell"/>
</dbReference>
<dbReference type="GO" id="GO:0015979">
    <property type="term" value="P:photosynthesis"/>
    <property type="evidence" value="ECO:0007669"/>
    <property type="project" value="UniProtKB-KW"/>
</dbReference>
<dbReference type="CDD" id="cd14770">
    <property type="entry name" value="PC-PEC_alpha"/>
    <property type="match status" value="1"/>
</dbReference>
<dbReference type="Gene3D" id="1.10.490.20">
    <property type="entry name" value="Phycocyanins"/>
    <property type="match status" value="1"/>
</dbReference>
<dbReference type="InterPro" id="IPR009050">
    <property type="entry name" value="Globin-like_sf"/>
</dbReference>
<dbReference type="InterPro" id="IPR012128">
    <property type="entry name" value="Phycobilisome_asu/bsu"/>
</dbReference>
<dbReference type="InterPro" id="IPR038719">
    <property type="entry name" value="Phycobilisome_asu/bsu_sf"/>
</dbReference>
<dbReference type="PANTHER" id="PTHR34011:SF4">
    <property type="entry name" value="C-PHYCOCYANIN ALPHA SUBUNIT"/>
    <property type="match status" value="1"/>
</dbReference>
<dbReference type="PANTHER" id="PTHR34011">
    <property type="entry name" value="PHYCOBILISOME 32.1 KDA LINKER POLYPEPTIDE, PHYCOCYANIN-ASSOCIATED, ROD 2-RELATED"/>
    <property type="match status" value="1"/>
</dbReference>
<dbReference type="Pfam" id="PF00502">
    <property type="entry name" value="Phycobilisome"/>
    <property type="match status" value="1"/>
</dbReference>
<dbReference type="PIRSF" id="PIRSF000081">
    <property type="entry name" value="Phycocyanin"/>
    <property type="match status" value="1"/>
</dbReference>
<dbReference type="SUPFAM" id="SSF46458">
    <property type="entry name" value="Globin-like"/>
    <property type="match status" value="1"/>
</dbReference>
<comment type="function">
    <text>Light-harvesting photosynthetic bile pigment-protein from the phycobiliprotein complex.</text>
</comment>
<comment type="biophysicochemical properties">
    <absorption>
        <max>~550 nm</max>
    </absorption>
</comment>
<comment type="subunit">
    <text>Heterodimer of an alpha and a beta chain.</text>
</comment>
<comment type="subcellular location">
    <subcellularLocation>
        <location>Cellular thylakoid membrane</location>
        <topology>Peripheral membrane protein</topology>
        <orientation>Cytoplasmic side</orientation>
    </subcellularLocation>
    <text>Forms the periphery of the phycobilisome rod.</text>
</comment>
<comment type="PTM">
    <text>Contains one covalently linked bilin chromophore.</text>
</comment>
<comment type="similarity">
    <text evidence="1">Belongs to the phycobiliprotein family.</text>
</comment>
<evidence type="ECO:0000305" key="1"/>
<evidence type="ECO:0007829" key="2">
    <source>
        <dbReference type="PDB" id="2J96"/>
    </source>
</evidence>
<proteinExistence type="evidence at protein level"/>
<keyword id="KW-0002">3D-structure</keyword>
<keyword id="KW-0042">Antenna complex</keyword>
<keyword id="KW-0089">Bile pigment</keyword>
<keyword id="KW-0157">Chromophore</keyword>
<keyword id="KW-0903">Direct protein sequencing</keyword>
<keyword id="KW-0249">Electron transport</keyword>
<keyword id="KW-0472">Membrane</keyword>
<keyword id="KW-0602">Photosynthesis</keyword>
<keyword id="KW-0605">Phycobilisome</keyword>
<keyword id="KW-0793">Thylakoid</keyword>
<keyword id="KW-0813">Transport</keyword>
<accession>P00309</accession>
<sequence length="162" mass="17564">MKTPLTEAIAAADLRGSYLSNTELQAVFGRFNRARAGLEAARAFANNGKKWAEAAANHVYQKFPYTTQMQGPQYASTPEGKAKCVRDIDHYLRTISYCCVVGGTGPLDDYVVAGLKEFNSALGLSPSWYIAALEFVRDNHGLTGDVAGEANTYINYAINALS</sequence>